<feature type="chain" id="PRO_1000197243" description="Thymidylate synthase">
    <location>
        <begin position="1"/>
        <end position="264"/>
    </location>
</feature>
<feature type="active site" description="Nucleophile" evidence="1">
    <location>
        <position position="146"/>
    </location>
</feature>
<feature type="binding site" description="in other chain" evidence="1">
    <location>
        <position position="21"/>
    </location>
    <ligand>
        <name>dUMP</name>
        <dbReference type="ChEBI" id="CHEBI:246422"/>
        <note>ligand shared between dimeric partners</note>
    </ligand>
</feature>
<feature type="binding site" evidence="1">
    <location>
        <position position="51"/>
    </location>
    <ligand>
        <name>(6R)-5,10-methylene-5,6,7,8-tetrahydrofolate</name>
        <dbReference type="ChEBI" id="CHEBI:15636"/>
    </ligand>
</feature>
<feature type="binding site" evidence="1">
    <location>
        <begin position="126"/>
        <end position="127"/>
    </location>
    <ligand>
        <name>dUMP</name>
        <dbReference type="ChEBI" id="CHEBI:246422"/>
        <note>ligand shared between dimeric partners</note>
    </ligand>
</feature>
<feature type="binding site" description="in other chain" evidence="1">
    <location>
        <begin position="166"/>
        <end position="169"/>
    </location>
    <ligand>
        <name>dUMP</name>
        <dbReference type="ChEBI" id="CHEBI:246422"/>
        <note>ligand shared between dimeric partners</note>
    </ligand>
</feature>
<feature type="binding site" evidence="1">
    <location>
        <position position="169"/>
    </location>
    <ligand>
        <name>(6R)-5,10-methylene-5,6,7,8-tetrahydrofolate</name>
        <dbReference type="ChEBI" id="CHEBI:15636"/>
    </ligand>
</feature>
<feature type="binding site" description="in other chain" evidence="1">
    <location>
        <position position="177"/>
    </location>
    <ligand>
        <name>dUMP</name>
        <dbReference type="ChEBI" id="CHEBI:246422"/>
        <note>ligand shared between dimeric partners</note>
    </ligand>
</feature>
<feature type="binding site" description="in other chain" evidence="1">
    <location>
        <begin position="207"/>
        <end position="209"/>
    </location>
    <ligand>
        <name>dUMP</name>
        <dbReference type="ChEBI" id="CHEBI:246422"/>
        <note>ligand shared between dimeric partners</note>
    </ligand>
</feature>
<feature type="binding site" evidence="1">
    <location>
        <position position="263"/>
    </location>
    <ligand>
        <name>(6R)-5,10-methylene-5,6,7,8-tetrahydrofolate</name>
        <dbReference type="ChEBI" id="CHEBI:15636"/>
    </ligand>
</feature>
<evidence type="ECO:0000255" key="1">
    <source>
        <dbReference type="HAMAP-Rule" id="MF_00008"/>
    </source>
</evidence>
<dbReference type="EC" id="2.1.1.45" evidence="1"/>
<dbReference type="EMBL" id="CU928161">
    <property type="protein sequence ID" value="CAR04362.1"/>
    <property type="molecule type" value="Genomic_DNA"/>
</dbReference>
<dbReference type="RefSeq" id="WP_000816232.1">
    <property type="nucleotide sequence ID" value="NC_011742.1"/>
</dbReference>
<dbReference type="SMR" id="B7MLH3"/>
<dbReference type="GeneID" id="93779171"/>
<dbReference type="KEGG" id="ecz:ECS88_3122"/>
<dbReference type="HOGENOM" id="CLU_021669_0_0_6"/>
<dbReference type="UniPathway" id="UPA00575"/>
<dbReference type="Proteomes" id="UP000000747">
    <property type="component" value="Chromosome"/>
</dbReference>
<dbReference type="GO" id="GO:0005829">
    <property type="term" value="C:cytosol"/>
    <property type="evidence" value="ECO:0007669"/>
    <property type="project" value="TreeGrafter"/>
</dbReference>
<dbReference type="GO" id="GO:0004799">
    <property type="term" value="F:thymidylate synthase activity"/>
    <property type="evidence" value="ECO:0007669"/>
    <property type="project" value="UniProtKB-UniRule"/>
</dbReference>
<dbReference type="GO" id="GO:0006231">
    <property type="term" value="P:dTMP biosynthetic process"/>
    <property type="evidence" value="ECO:0007669"/>
    <property type="project" value="UniProtKB-UniRule"/>
</dbReference>
<dbReference type="GO" id="GO:0006235">
    <property type="term" value="P:dTTP biosynthetic process"/>
    <property type="evidence" value="ECO:0007669"/>
    <property type="project" value="UniProtKB-UniRule"/>
</dbReference>
<dbReference type="GO" id="GO:0032259">
    <property type="term" value="P:methylation"/>
    <property type="evidence" value="ECO:0007669"/>
    <property type="project" value="UniProtKB-KW"/>
</dbReference>
<dbReference type="CDD" id="cd00351">
    <property type="entry name" value="TS_Pyrimidine_HMase"/>
    <property type="match status" value="1"/>
</dbReference>
<dbReference type="FunFam" id="3.30.572.10:FF:000001">
    <property type="entry name" value="Thymidylate synthase"/>
    <property type="match status" value="1"/>
</dbReference>
<dbReference type="Gene3D" id="3.30.572.10">
    <property type="entry name" value="Thymidylate synthase/dCMP hydroxymethylase domain"/>
    <property type="match status" value="1"/>
</dbReference>
<dbReference type="HAMAP" id="MF_00008">
    <property type="entry name" value="Thymidy_synth_bact"/>
    <property type="match status" value="1"/>
</dbReference>
<dbReference type="InterPro" id="IPR045097">
    <property type="entry name" value="Thymidate_synth/dCMP_Mease"/>
</dbReference>
<dbReference type="InterPro" id="IPR023451">
    <property type="entry name" value="Thymidate_synth/dCMP_Mease_dom"/>
</dbReference>
<dbReference type="InterPro" id="IPR036926">
    <property type="entry name" value="Thymidate_synth/dCMP_Mease_sf"/>
</dbReference>
<dbReference type="InterPro" id="IPR000398">
    <property type="entry name" value="Thymidylate_synthase"/>
</dbReference>
<dbReference type="InterPro" id="IPR020940">
    <property type="entry name" value="Thymidylate_synthase_AS"/>
</dbReference>
<dbReference type="NCBIfam" id="NF002497">
    <property type="entry name" value="PRK01827.1-3"/>
    <property type="match status" value="1"/>
</dbReference>
<dbReference type="NCBIfam" id="NF002499">
    <property type="entry name" value="PRK01827.1-5"/>
    <property type="match status" value="1"/>
</dbReference>
<dbReference type="NCBIfam" id="TIGR03284">
    <property type="entry name" value="thym_sym"/>
    <property type="match status" value="2"/>
</dbReference>
<dbReference type="PANTHER" id="PTHR11548:SF9">
    <property type="entry name" value="THYMIDYLATE SYNTHASE"/>
    <property type="match status" value="1"/>
</dbReference>
<dbReference type="PANTHER" id="PTHR11548">
    <property type="entry name" value="THYMIDYLATE SYNTHASE 1"/>
    <property type="match status" value="1"/>
</dbReference>
<dbReference type="Pfam" id="PF00303">
    <property type="entry name" value="Thymidylat_synt"/>
    <property type="match status" value="1"/>
</dbReference>
<dbReference type="PRINTS" id="PR00108">
    <property type="entry name" value="THYMDSNTHASE"/>
</dbReference>
<dbReference type="SUPFAM" id="SSF55831">
    <property type="entry name" value="Thymidylate synthase/dCMP hydroxymethylase"/>
    <property type="match status" value="1"/>
</dbReference>
<dbReference type="PROSITE" id="PS00091">
    <property type="entry name" value="THYMIDYLATE_SYNTHASE"/>
    <property type="match status" value="1"/>
</dbReference>
<name>TYSY_ECO45</name>
<accession>B7MLH3</accession>
<reference key="1">
    <citation type="journal article" date="2009" name="PLoS Genet.">
        <title>Organised genome dynamics in the Escherichia coli species results in highly diverse adaptive paths.</title>
        <authorList>
            <person name="Touchon M."/>
            <person name="Hoede C."/>
            <person name="Tenaillon O."/>
            <person name="Barbe V."/>
            <person name="Baeriswyl S."/>
            <person name="Bidet P."/>
            <person name="Bingen E."/>
            <person name="Bonacorsi S."/>
            <person name="Bouchier C."/>
            <person name="Bouvet O."/>
            <person name="Calteau A."/>
            <person name="Chiapello H."/>
            <person name="Clermont O."/>
            <person name="Cruveiller S."/>
            <person name="Danchin A."/>
            <person name="Diard M."/>
            <person name="Dossat C."/>
            <person name="Karoui M.E."/>
            <person name="Frapy E."/>
            <person name="Garry L."/>
            <person name="Ghigo J.M."/>
            <person name="Gilles A.M."/>
            <person name="Johnson J."/>
            <person name="Le Bouguenec C."/>
            <person name="Lescat M."/>
            <person name="Mangenot S."/>
            <person name="Martinez-Jehanne V."/>
            <person name="Matic I."/>
            <person name="Nassif X."/>
            <person name="Oztas S."/>
            <person name="Petit M.A."/>
            <person name="Pichon C."/>
            <person name="Rouy Z."/>
            <person name="Ruf C.S."/>
            <person name="Schneider D."/>
            <person name="Tourret J."/>
            <person name="Vacherie B."/>
            <person name="Vallenet D."/>
            <person name="Medigue C."/>
            <person name="Rocha E.P.C."/>
            <person name="Denamur E."/>
        </authorList>
    </citation>
    <scope>NUCLEOTIDE SEQUENCE [LARGE SCALE GENOMIC DNA]</scope>
    <source>
        <strain>S88 / ExPEC</strain>
    </source>
</reference>
<comment type="function">
    <text evidence="1">Catalyzes the reductive methylation of 2'-deoxyuridine-5'-monophosphate (dUMP) to 2'-deoxythymidine-5'-monophosphate (dTMP) while utilizing 5,10-methylenetetrahydrofolate (mTHF) as the methyl donor and reductant in the reaction, yielding dihydrofolate (DHF) as a by-product. This enzymatic reaction provides an intracellular de novo source of dTMP, an essential precursor for DNA biosynthesis.</text>
</comment>
<comment type="catalytic activity">
    <reaction evidence="1">
        <text>dUMP + (6R)-5,10-methylene-5,6,7,8-tetrahydrofolate = 7,8-dihydrofolate + dTMP</text>
        <dbReference type="Rhea" id="RHEA:12104"/>
        <dbReference type="ChEBI" id="CHEBI:15636"/>
        <dbReference type="ChEBI" id="CHEBI:57451"/>
        <dbReference type="ChEBI" id="CHEBI:63528"/>
        <dbReference type="ChEBI" id="CHEBI:246422"/>
        <dbReference type="EC" id="2.1.1.45"/>
    </reaction>
</comment>
<comment type="pathway">
    <text evidence="1">Pyrimidine metabolism; dTTP biosynthesis.</text>
</comment>
<comment type="subunit">
    <text evidence="1">Homodimer.</text>
</comment>
<comment type="subcellular location">
    <subcellularLocation>
        <location evidence="1">Cytoplasm</location>
    </subcellularLocation>
</comment>
<comment type="similarity">
    <text evidence="1">Belongs to the thymidylate synthase family. Bacterial-type ThyA subfamily.</text>
</comment>
<keyword id="KW-0963">Cytoplasm</keyword>
<keyword id="KW-0489">Methyltransferase</keyword>
<keyword id="KW-0545">Nucleotide biosynthesis</keyword>
<keyword id="KW-1185">Reference proteome</keyword>
<keyword id="KW-0808">Transferase</keyword>
<protein>
    <recommendedName>
        <fullName evidence="1">Thymidylate synthase</fullName>
        <shortName evidence="1">TS</shortName>
        <shortName evidence="1">TSase</shortName>
        <ecNumber evidence="1">2.1.1.45</ecNumber>
    </recommendedName>
</protein>
<gene>
    <name evidence="1" type="primary">thyA</name>
    <name type="ordered locus">ECS88_3122</name>
</gene>
<organism>
    <name type="scientific">Escherichia coli O45:K1 (strain S88 / ExPEC)</name>
    <dbReference type="NCBI Taxonomy" id="585035"/>
    <lineage>
        <taxon>Bacteria</taxon>
        <taxon>Pseudomonadati</taxon>
        <taxon>Pseudomonadota</taxon>
        <taxon>Gammaproteobacteria</taxon>
        <taxon>Enterobacterales</taxon>
        <taxon>Enterobacteriaceae</taxon>
        <taxon>Escherichia</taxon>
    </lineage>
</organism>
<proteinExistence type="inferred from homology"/>
<sequence length="264" mass="30480">MKQYLELMQKVLDEGTQKNDRTGTGTLSIFGHQMRFNLQDGFPLVTTKRCHLRSIIHELLWFLQGDTNIAYLHENNVTIWDEWADENGDLGPVYGKQWRAWPTPDGRHIDQITTVLNQLKNDPDSRRIIVSAWNVGELDKMALAPCHAFFQFYVADGKLSCQLYQRSCDVFLGLPFNIASYALLVHMMAQQCDLEVGDFVWTGGDTHLYSNHMDQTHLQLSREPRPLPKLIIKRKPESIFDYRFEDFEIEGYDPHPGIKAPVAI</sequence>